<protein>
    <recommendedName>
        <fullName evidence="2">Amidophosphoribosyltransferase</fullName>
        <shortName evidence="2">ATase</shortName>
        <ecNumber evidence="2">2.4.2.14</ecNumber>
    </recommendedName>
    <alternativeName>
        <fullName evidence="2">Glutamine phosphoribosylpyrophosphate amidotransferase</fullName>
        <shortName evidence="2">GPATase</shortName>
    </alternativeName>
</protein>
<sequence length="494" mass="54431">MSNYSGLNEECGVFGIWNHPEAAQLTYMGLHSLQHRGQEGAGIVVSNHETLKGERGLGLLTEAIKDEHMSNIKGYPHAIGHVRYATSGNKGIENIQPFLYHFYDMSVGICHNGNLINAKSLRQNLEEQGAIFHSSSDTEVIMHLIRRSKAPTFEEALKESLRLIKGGFTFAILTKDALYGVVDPNAIRPLVVGKMENGAYILASETCAIDVLGAEFIQDIHAGEYVVITDEGIEVKTYTRQTTTAISAMEYIYFARPDSTIAGKNVHAVRKASGKRLAQENPAKADMVIGVPNSSLSAASGYAEEIGLPYEMGLVKNQYVARTFIQPTQELREQGVRVKLSAVKDIVDGKDIVLVDDSIVRGTTIKRIVKMLKDSGANRIHVRIASPEFMFPSFYGIDVSTTAELISASKSPEEIKNHIGADSLAYLSVDGLIESIGLDYDAPYHGLCVESFTGDYPAGLYDYEKNYKKHLSERQKSYIANNKHYFDSEGNLHV</sequence>
<organism>
    <name type="scientific">Staphylococcus epidermidis (strain ATCC 12228 / FDA PCI 1200)</name>
    <dbReference type="NCBI Taxonomy" id="176280"/>
    <lineage>
        <taxon>Bacteria</taxon>
        <taxon>Bacillati</taxon>
        <taxon>Bacillota</taxon>
        <taxon>Bacilli</taxon>
        <taxon>Bacillales</taxon>
        <taxon>Staphylococcaceae</taxon>
        <taxon>Staphylococcus</taxon>
    </lineage>
</organism>
<reference key="1">
    <citation type="journal article" date="2003" name="Mol. Microbiol.">
        <title>Genome-based analysis of virulence genes in a non-biofilm-forming Staphylococcus epidermidis strain (ATCC 12228).</title>
        <authorList>
            <person name="Zhang Y.-Q."/>
            <person name="Ren S.-X."/>
            <person name="Li H.-L."/>
            <person name="Wang Y.-X."/>
            <person name="Fu G."/>
            <person name="Yang J."/>
            <person name="Qin Z.-Q."/>
            <person name="Miao Y.-G."/>
            <person name="Wang W.-Y."/>
            <person name="Chen R.-S."/>
            <person name="Shen Y."/>
            <person name="Chen Z."/>
            <person name="Yuan Z.-H."/>
            <person name="Zhao G.-P."/>
            <person name="Qu D."/>
            <person name="Danchin A."/>
            <person name="Wen Y.-M."/>
        </authorList>
    </citation>
    <scope>NUCLEOTIDE SEQUENCE [LARGE SCALE GENOMIC DNA]</scope>
    <source>
        <strain>ATCC 12228 / FDA PCI 1200</strain>
    </source>
</reference>
<comment type="function">
    <text evidence="2">Catalyzes the formation of phosphoribosylamine from phosphoribosylpyrophosphate (PRPP) and glutamine.</text>
</comment>
<comment type="catalytic activity">
    <reaction evidence="2">
        <text>5-phospho-beta-D-ribosylamine + L-glutamate + diphosphate = 5-phospho-alpha-D-ribose 1-diphosphate + L-glutamine + H2O</text>
        <dbReference type="Rhea" id="RHEA:14905"/>
        <dbReference type="ChEBI" id="CHEBI:15377"/>
        <dbReference type="ChEBI" id="CHEBI:29985"/>
        <dbReference type="ChEBI" id="CHEBI:33019"/>
        <dbReference type="ChEBI" id="CHEBI:58017"/>
        <dbReference type="ChEBI" id="CHEBI:58359"/>
        <dbReference type="ChEBI" id="CHEBI:58681"/>
        <dbReference type="EC" id="2.4.2.14"/>
    </reaction>
</comment>
<comment type="cofactor">
    <cofactor evidence="2">
        <name>Mg(2+)</name>
        <dbReference type="ChEBI" id="CHEBI:18420"/>
    </cofactor>
    <text evidence="2">Binds 1 Mg(2+) ion per subunit.</text>
</comment>
<comment type="pathway">
    <text evidence="2">Purine metabolism; IMP biosynthesis via de novo pathway; N(1)-(5-phospho-D-ribosyl)glycinamide from 5-phospho-alpha-D-ribose 1-diphosphate: step 1/2.</text>
</comment>
<comment type="similarity">
    <text evidence="2">In the C-terminal section; belongs to the purine/pyrimidine phosphoribosyltransferase family.</text>
</comment>
<proteinExistence type="inferred from homology"/>
<evidence type="ECO:0000250" key="1"/>
<evidence type="ECO:0000255" key="2">
    <source>
        <dbReference type="HAMAP-Rule" id="MF_01931"/>
    </source>
</evidence>
<name>PUR1_STAES</name>
<dbReference type="EC" id="2.4.2.14" evidence="2"/>
<dbReference type="EMBL" id="AE015929">
    <property type="protein sequence ID" value="AAO04365.1"/>
    <property type="molecule type" value="Genomic_DNA"/>
</dbReference>
<dbReference type="RefSeq" id="NP_764323.1">
    <property type="nucleotide sequence ID" value="NC_004461.1"/>
</dbReference>
<dbReference type="RefSeq" id="WP_002485328.1">
    <property type="nucleotide sequence ID" value="NZ_WBME01000028.1"/>
</dbReference>
<dbReference type="SMR" id="Q8CT30"/>
<dbReference type="MEROPS" id="C44.001"/>
<dbReference type="GeneID" id="50019092"/>
<dbReference type="KEGG" id="sep:SE_0768"/>
<dbReference type="PATRIC" id="fig|176280.10.peg.740"/>
<dbReference type="eggNOG" id="COG0034">
    <property type="taxonomic scope" value="Bacteria"/>
</dbReference>
<dbReference type="HOGENOM" id="CLU_022389_3_1_9"/>
<dbReference type="OrthoDB" id="9801213at2"/>
<dbReference type="UniPathway" id="UPA00074">
    <property type="reaction ID" value="UER00124"/>
</dbReference>
<dbReference type="Proteomes" id="UP000001411">
    <property type="component" value="Chromosome"/>
</dbReference>
<dbReference type="GO" id="GO:0004044">
    <property type="term" value="F:amidophosphoribosyltransferase activity"/>
    <property type="evidence" value="ECO:0007669"/>
    <property type="project" value="UniProtKB-UniRule"/>
</dbReference>
<dbReference type="GO" id="GO:0000287">
    <property type="term" value="F:magnesium ion binding"/>
    <property type="evidence" value="ECO:0007669"/>
    <property type="project" value="UniProtKB-UniRule"/>
</dbReference>
<dbReference type="GO" id="GO:0006189">
    <property type="term" value="P:'de novo' IMP biosynthetic process"/>
    <property type="evidence" value="ECO:0007669"/>
    <property type="project" value="UniProtKB-UniRule"/>
</dbReference>
<dbReference type="GO" id="GO:0009113">
    <property type="term" value="P:purine nucleobase biosynthetic process"/>
    <property type="evidence" value="ECO:0007669"/>
    <property type="project" value="InterPro"/>
</dbReference>
<dbReference type="CDD" id="cd00715">
    <property type="entry name" value="GPATase_N"/>
    <property type="match status" value="1"/>
</dbReference>
<dbReference type="CDD" id="cd06223">
    <property type="entry name" value="PRTases_typeI"/>
    <property type="match status" value="1"/>
</dbReference>
<dbReference type="Gene3D" id="3.40.50.2020">
    <property type="match status" value="1"/>
</dbReference>
<dbReference type="Gene3D" id="3.60.20.10">
    <property type="entry name" value="Glutamine Phosphoribosylpyrophosphate, subunit 1, domain 1"/>
    <property type="match status" value="1"/>
</dbReference>
<dbReference type="HAMAP" id="MF_01931">
    <property type="entry name" value="PurF"/>
    <property type="match status" value="1"/>
</dbReference>
<dbReference type="InterPro" id="IPR017932">
    <property type="entry name" value="GATase_2_dom"/>
</dbReference>
<dbReference type="InterPro" id="IPR029055">
    <property type="entry name" value="Ntn_hydrolases_N"/>
</dbReference>
<dbReference type="InterPro" id="IPR000836">
    <property type="entry name" value="PRibTrfase_dom"/>
</dbReference>
<dbReference type="InterPro" id="IPR029057">
    <property type="entry name" value="PRTase-like"/>
</dbReference>
<dbReference type="InterPro" id="IPR005854">
    <property type="entry name" value="PurF"/>
</dbReference>
<dbReference type="InterPro" id="IPR035584">
    <property type="entry name" value="PurF_N"/>
</dbReference>
<dbReference type="NCBIfam" id="TIGR01134">
    <property type="entry name" value="purF"/>
    <property type="match status" value="1"/>
</dbReference>
<dbReference type="PANTHER" id="PTHR11907">
    <property type="entry name" value="AMIDOPHOSPHORIBOSYLTRANSFERASE"/>
    <property type="match status" value="1"/>
</dbReference>
<dbReference type="Pfam" id="PF13537">
    <property type="entry name" value="GATase_7"/>
    <property type="match status" value="1"/>
</dbReference>
<dbReference type="Pfam" id="PF00156">
    <property type="entry name" value="Pribosyltran"/>
    <property type="match status" value="1"/>
</dbReference>
<dbReference type="PIRSF" id="PIRSF000485">
    <property type="entry name" value="Amd_phspho_trans"/>
    <property type="match status" value="1"/>
</dbReference>
<dbReference type="SUPFAM" id="SSF56235">
    <property type="entry name" value="N-terminal nucleophile aminohydrolases (Ntn hydrolases)"/>
    <property type="match status" value="1"/>
</dbReference>
<dbReference type="SUPFAM" id="SSF53271">
    <property type="entry name" value="PRTase-like"/>
    <property type="match status" value="1"/>
</dbReference>
<dbReference type="PROSITE" id="PS51278">
    <property type="entry name" value="GATASE_TYPE_2"/>
    <property type="match status" value="1"/>
</dbReference>
<dbReference type="PROSITE" id="PS00103">
    <property type="entry name" value="PUR_PYR_PR_TRANSFER"/>
    <property type="match status" value="1"/>
</dbReference>
<gene>
    <name evidence="2" type="primary">purF</name>
    <name type="ordered locus">SE_0768</name>
</gene>
<keyword id="KW-0315">Glutamine amidotransferase</keyword>
<keyword id="KW-0328">Glycosyltransferase</keyword>
<keyword id="KW-0460">Magnesium</keyword>
<keyword id="KW-0479">Metal-binding</keyword>
<keyword id="KW-0658">Purine biosynthesis</keyword>
<keyword id="KW-0808">Transferase</keyword>
<accession>Q8CT30</accession>
<feature type="propeptide" id="PRO_0000029269" evidence="1">
    <location>
        <begin position="1"/>
        <end position="10"/>
    </location>
</feature>
<feature type="chain" id="PRO_0000029270" description="Amidophosphoribosyltransferase">
    <location>
        <begin position="11"/>
        <end position="494"/>
    </location>
</feature>
<feature type="domain" description="Glutamine amidotransferase type-2" evidence="2">
    <location>
        <begin position="11"/>
        <end position="231"/>
    </location>
</feature>
<feature type="active site" description="Nucleophile" evidence="2">
    <location>
        <position position="11"/>
    </location>
</feature>
<feature type="binding site" evidence="2">
    <location>
        <position position="294"/>
    </location>
    <ligand>
        <name>Mg(2+)</name>
        <dbReference type="ChEBI" id="CHEBI:18420"/>
    </ligand>
</feature>
<feature type="binding site" evidence="2">
    <location>
        <position position="356"/>
    </location>
    <ligand>
        <name>Mg(2+)</name>
        <dbReference type="ChEBI" id="CHEBI:18420"/>
    </ligand>
</feature>
<feature type="binding site" evidence="2">
    <location>
        <position position="357"/>
    </location>
    <ligand>
        <name>Mg(2+)</name>
        <dbReference type="ChEBI" id="CHEBI:18420"/>
    </ligand>
</feature>